<feature type="chain" id="PRO_0000389888" description="Acetyl-coenzyme A carboxylase carboxyl transferase subunit beta">
    <location>
        <begin position="1"/>
        <end position="288"/>
    </location>
</feature>
<feature type="domain" description="CoA carboxyltransferase N-terminal" evidence="2">
    <location>
        <begin position="34"/>
        <end position="288"/>
    </location>
</feature>
<feature type="zinc finger region" description="C4-type" evidence="1">
    <location>
        <begin position="38"/>
        <end position="59"/>
    </location>
</feature>
<feature type="binding site" evidence="1">
    <location>
        <position position="38"/>
    </location>
    <ligand>
        <name>Zn(2+)</name>
        <dbReference type="ChEBI" id="CHEBI:29105"/>
    </ligand>
</feature>
<feature type="binding site" evidence="1">
    <location>
        <position position="41"/>
    </location>
    <ligand>
        <name>Zn(2+)</name>
        <dbReference type="ChEBI" id="CHEBI:29105"/>
    </ligand>
</feature>
<feature type="binding site" evidence="1">
    <location>
        <position position="56"/>
    </location>
    <ligand>
        <name>Zn(2+)</name>
        <dbReference type="ChEBI" id="CHEBI:29105"/>
    </ligand>
</feature>
<feature type="binding site" evidence="1">
    <location>
        <position position="59"/>
    </location>
    <ligand>
        <name>Zn(2+)</name>
        <dbReference type="ChEBI" id="CHEBI:29105"/>
    </ligand>
</feature>
<gene>
    <name evidence="1" type="primary">accD</name>
    <name type="ordered locus">SSUSC84_1623</name>
</gene>
<evidence type="ECO:0000255" key="1">
    <source>
        <dbReference type="HAMAP-Rule" id="MF_01395"/>
    </source>
</evidence>
<evidence type="ECO:0000255" key="2">
    <source>
        <dbReference type="PROSITE-ProRule" id="PRU01136"/>
    </source>
</evidence>
<name>ACCD_STRSX</name>
<protein>
    <recommendedName>
        <fullName evidence="1">Acetyl-coenzyme A carboxylase carboxyl transferase subunit beta</fullName>
        <shortName evidence="1">ACCase subunit beta</shortName>
        <shortName evidence="1">Acetyl-CoA carboxylase carboxyltransferase subunit beta</shortName>
        <ecNumber evidence="1">2.1.3.15</ecNumber>
    </recommendedName>
</protein>
<accession>C6GN01</accession>
<proteinExistence type="inferred from homology"/>
<keyword id="KW-0067">ATP-binding</keyword>
<keyword id="KW-0963">Cytoplasm</keyword>
<keyword id="KW-0275">Fatty acid biosynthesis</keyword>
<keyword id="KW-0276">Fatty acid metabolism</keyword>
<keyword id="KW-0444">Lipid biosynthesis</keyword>
<keyword id="KW-0443">Lipid metabolism</keyword>
<keyword id="KW-0479">Metal-binding</keyword>
<keyword id="KW-0547">Nucleotide-binding</keyword>
<keyword id="KW-0808">Transferase</keyword>
<keyword id="KW-0862">Zinc</keyword>
<keyword id="KW-0863">Zinc-finger</keyword>
<sequence length="288" mass="31827">MALFRKKDKYIRINPNRSRIESAPQAKPEVPDELFSKCPACKVILYKNDLGLEKTCQHCSYNFRITAQERRALTVDEGSFEELFTGIETTNPLDFPNYLEKLAATRQKTGLDEAVLTGKATIGGQPVALGIMDSHFIMASMGTVVGEKITRLFELAIEERLPVVLFTASGGARMQEGIMSLMQMAKISAAVKRHSNAGLFYLTVLTDPTTGGVTASFAMEGDIILAEPQTLVGFAGRRVIESTVRENLPDDFQKAEFLQEHGFVDAIVKRQDLPATISRLLRMHGGVR</sequence>
<reference key="1">
    <citation type="journal article" date="2009" name="PLoS ONE">
        <title>Rapid evolution of virulence and drug resistance in the emerging zoonotic pathogen Streptococcus suis.</title>
        <authorList>
            <person name="Holden M.T.G."/>
            <person name="Hauser H."/>
            <person name="Sanders M."/>
            <person name="Ngo T.H."/>
            <person name="Cherevach I."/>
            <person name="Cronin A."/>
            <person name="Goodhead I."/>
            <person name="Mungall K."/>
            <person name="Quail M.A."/>
            <person name="Price C."/>
            <person name="Rabbinowitsch E."/>
            <person name="Sharp S."/>
            <person name="Croucher N.J."/>
            <person name="Chieu T.B."/>
            <person name="Mai N.T.H."/>
            <person name="Diep T.S."/>
            <person name="Chinh N.T."/>
            <person name="Kehoe M."/>
            <person name="Leigh J.A."/>
            <person name="Ward P.N."/>
            <person name="Dowson C.G."/>
            <person name="Whatmore A.M."/>
            <person name="Chanter N."/>
            <person name="Iversen P."/>
            <person name="Gottschalk M."/>
            <person name="Slater J.D."/>
            <person name="Smith H.E."/>
            <person name="Spratt B.G."/>
            <person name="Xu J."/>
            <person name="Ye C."/>
            <person name="Bentley S."/>
            <person name="Barrell B.G."/>
            <person name="Schultsz C."/>
            <person name="Maskell D.J."/>
            <person name="Parkhill J."/>
        </authorList>
    </citation>
    <scope>NUCLEOTIDE SEQUENCE [LARGE SCALE GENOMIC DNA]</scope>
    <source>
        <strain>SC84</strain>
    </source>
</reference>
<dbReference type="EC" id="2.1.3.15" evidence="1"/>
<dbReference type="EMBL" id="FM252031">
    <property type="protein sequence ID" value="CAZ52399.1"/>
    <property type="molecule type" value="Genomic_DNA"/>
</dbReference>
<dbReference type="RefSeq" id="WP_012028463.1">
    <property type="nucleotide sequence ID" value="NC_012924.1"/>
</dbReference>
<dbReference type="SMR" id="C6GN01"/>
<dbReference type="GeneID" id="8154761"/>
<dbReference type="KEGG" id="sss:SSUSC84_1623"/>
<dbReference type="HOGENOM" id="CLU_015486_1_1_9"/>
<dbReference type="UniPathway" id="UPA00655">
    <property type="reaction ID" value="UER00711"/>
</dbReference>
<dbReference type="GO" id="GO:0009317">
    <property type="term" value="C:acetyl-CoA carboxylase complex"/>
    <property type="evidence" value="ECO:0007669"/>
    <property type="project" value="InterPro"/>
</dbReference>
<dbReference type="GO" id="GO:0003989">
    <property type="term" value="F:acetyl-CoA carboxylase activity"/>
    <property type="evidence" value="ECO:0007669"/>
    <property type="project" value="InterPro"/>
</dbReference>
<dbReference type="GO" id="GO:0005524">
    <property type="term" value="F:ATP binding"/>
    <property type="evidence" value="ECO:0007669"/>
    <property type="project" value="UniProtKB-KW"/>
</dbReference>
<dbReference type="GO" id="GO:0016743">
    <property type="term" value="F:carboxyl- or carbamoyltransferase activity"/>
    <property type="evidence" value="ECO:0007669"/>
    <property type="project" value="UniProtKB-UniRule"/>
</dbReference>
<dbReference type="GO" id="GO:0008270">
    <property type="term" value="F:zinc ion binding"/>
    <property type="evidence" value="ECO:0007669"/>
    <property type="project" value="UniProtKB-UniRule"/>
</dbReference>
<dbReference type="GO" id="GO:0006633">
    <property type="term" value="P:fatty acid biosynthetic process"/>
    <property type="evidence" value="ECO:0007669"/>
    <property type="project" value="UniProtKB-KW"/>
</dbReference>
<dbReference type="GO" id="GO:2001295">
    <property type="term" value="P:malonyl-CoA biosynthetic process"/>
    <property type="evidence" value="ECO:0007669"/>
    <property type="project" value="UniProtKB-UniRule"/>
</dbReference>
<dbReference type="Gene3D" id="3.90.226.10">
    <property type="entry name" value="2-enoyl-CoA Hydratase, Chain A, domain 1"/>
    <property type="match status" value="1"/>
</dbReference>
<dbReference type="HAMAP" id="MF_01395">
    <property type="entry name" value="AcetylCoA_CT_beta"/>
    <property type="match status" value="1"/>
</dbReference>
<dbReference type="InterPro" id="IPR034733">
    <property type="entry name" value="AcCoA_carboxyl_beta"/>
</dbReference>
<dbReference type="InterPro" id="IPR000438">
    <property type="entry name" value="Acetyl_CoA_COase_Trfase_b_su"/>
</dbReference>
<dbReference type="InterPro" id="IPR029045">
    <property type="entry name" value="ClpP/crotonase-like_dom_sf"/>
</dbReference>
<dbReference type="InterPro" id="IPR011762">
    <property type="entry name" value="COA_CT_N"/>
</dbReference>
<dbReference type="NCBIfam" id="TIGR00515">
    <property type="entry name" value="accD"/>
    <property type="match status" value="1"/>
</dbReference>
<dbReference type="PANTHER" id="PTHR42995">
    <property type="entry name" value="ACETYL-COENZYME A CARBOXYLASE CARBOXYL TRANSFERASE SUBUNIT BETA, CHLOROPLASTIC"/>
    <property type="match status" value="1"/>
</dbReference>
<dbReference type="PANTHER" id="PTHR42995:SF5">
    <property type="entry name" value="ACETYL-COENZYME A CARBOXYLASE CARBOXYL TRANSFERASE SUBUNIT BETA, CHLOROPLASTIC"/>
    <property type="match status" value="1"/>
</dbReference>
<dbReference type="Pfam" id="PF01039">
    <property type="entry name" value="Carboxyl_trans"/>
    <property type="match status" value="1"/>
</dbReference>
<dbReference type="PRINTS" id="PR01070">
    <property type="entry name" value="ACCCTRFRASEB"/>
</dbReference>
<dbReference type="SUPFAM" id="SSF52096">
    <property type="entry name" value="ClpP/crotonase"/>
    <property type="match status" value="1"/>
</dbReference>
<dbReference type="PROSITE" id="PS50980">
    <property type="entry name" value="COA_CT_NTER"/>
    <property type="match status" value="1"/>
</dbReference>
<organism>
    <name type="scientific">Streptococcus suis (strain SC84)</name>
    <dbReference type="NCBI Taxonomy" id="568813"/>
    <lineage>
        <taxon>Bacteria</taxon>
        <taxon>Bacillati</taxon>
        <taxon>Bacillota</taxon>
        <taxon>Bacilli</taxon>
        <taxon>Lactobacillales</taxon>
        <taxon>Streptococcaceae</taxon>
        <taxon>Streptococcus</taxon>
    </lineage>
</organism>
<comment type="function">
    <text evidence="1">Component of the acetyl coenzyme A carboxylase (ACC) complex. Biotin carboxylase (BC) catalyzes the carboxylation of biotin on its carrier protein (BCCP) and then the CO(2) group is transferred by the transcarboxylase to acetyl-CoA to form malonyl-CoA.</text>
</comment>
<comment type="catalytic activity">
    <reaction evidence="1">
        <text>N(6)-carboxybiotinyl-L-lysyl-[protein] + acetyl-CoA = N(6)-biotinyl-L-lysyl-[protein] + malonyl-CoA</text>
        <dbReference type="Rhea" id="RHEA:54728"/>
        <dbReference type="Rhea" id="RHEA-COMP:10505"/>
        <dbReference type="Rhea" id="RHEA-COMP:10506"/>
        <dbReference type="ChEBI" id="CHEBI:57288"/>
        <dbReference type="ChEBI" id="CHEBI:57384"/>
        <dbReference type="ChEBI" id="CHEBI:83144"/>
        <dbReference type="ChEBI" id="CHEBI:83145"/>
        <dbReference type="EC" id="2.1.3.15"/>
    </reaction>
</comment>
<comment type="cofactor">
    <cofactor evidence="1">
        <name>Zn(2+)</name>
        <dbReference type="ChEBI" id="CHEBI:29105"/>
    </cofactor>
    <text evidence="1">Binds 1 zinc ion per subunit.</text>
</comment>
<comment type="pathway">
    <text evidence="1">Lipid metabolism; malonyl-CoA biosynthesis; malonyl-CoA from acetyl-CoA: step 1/1.</text>
</comment>
<comment type="subunit">
    <text evidence="1">Acetyl-CoA carboxylase is a heterohexamer composed of biotin carboxyl carrier protein (AccB), biotin carboxylase (AccC) and two subunits each of ACCase subunit alpha (AccA) and ACCase subunit beta (AccD).</text>
</comment>
<comment type="subcellular location">
    <subcellularLocation>
        <location evidence="1">Cytoplasm</location>
    </subcellularLocation>
</comment>
<comment type="similarity">
    <text evidence="1">Belongs to the AccD/PCCB family.</text>
</comment>